<sequence>MDRNSVIGLVLISLIMIVWMQFMAPEKKPLQDIDKPAVSLQEEVSPVSDIPAAAATPESYGEFSAMSDGEEKLLTVDNEYFTAVLSSRGATLKSMMLKKHLDSSREQFNLIRKNDSGALSLFFLTQAGKQIDTRDLYFSTAVTESQVTVGADNQFSVTYRLDVAPEKNIVITYTFSGDSYAIGYDISMNGFASEIAGNEFQLQWDGGLVHSEKNDDDELHNSWAAAYMGGSLLKLDASDQSKTYREEQSGVAGWVAARTKYFVAAMIPSSETEGVYLAGKRLAGEPFENYTTALKFRVPSDESSFKESLRLYVGPIDYNVLNALGVNLEKIMDFGWDWLTRPFAEYIILPIFDLLNKFIGNYGLIIIIFAFLIKLVTYPLTMASTKSMKKMSALQPMMKEIQEKYKDNPAKLQSELGRIYKEAGVNPLGGCLPVVLQMPLLFAMFYVFRSSIQLRQHGFLWANDLSVPDSILDFGFSIPLYGDHIALFPILMAVAVFLQQKITPTAQTNDQMKAMIYIFPVMMLLFFNNMPAGLGLYYLMFNVFSIAQTWYINKTASTDDLPALSPVVAAPPKAPKKKKNARKR</sequence>
<protein>
    <recommendedName>
        <fullName evidence="1">Membrane protein insertase YidC</fullName>
    </recommendedName>
    <alternativeName>
        <fullName evidence="1">Foldase YidC</fullName>
    </alternativeName>
    <alternativeName>
        <fullName evidence="1">Membrane integrase YidC</fullName>
    </alternativeName>
    <alternativeName>
        <fullName evidence="1">Membrane protein YidC</fullName>
    </alternativeName>
</protein>
<name>YIDC_PROA2</name>
<proteinExistence type="inferred from homology"/>
<keyword id="KW-0997">Cell inner membrane</keyword>
<keyword id="KW-1003">Cell membrane</keyword>
<keyword id="KW-0143">Chaperone</keyword>
<keyword id="KW-0472">Membrane</keyword>
<keyword id="KW-0653">Protein transport</keyword>
<keyword id="KW-0812">Transmembrane</keyword>
<keyword id="KW-1133">Transmembrane helix</keyword>
<keyword id="KW-0813">Transport</keyword>
<evidence type="ECO:0000255" key="1">
    <source>
        <dbReference type="HAMAP-Rule" id="MF_01810"/>
    </source>
</evidence>
<evidence type="ECO:0000256" key="2">
    <source>
        <dbReference type="SAM" id="MobiDB-lite"/>
    </source>
</evidence>
<organism>
    <name type="scientific">Prosthecochloris aestuarii (strain DSM 271 / SK 413)</name>
    <dbReference type="NCBI Taxonomy" id="290512"/>
    <lineage>
        <taxon>Bacteria</taxon>
        <taxon>Pseudomonadati</taxon>
        <taxon>Chlorobiota</taxon>
        <taxon>Chlorobiia</taxon>
        <taxon>Chlorobiales</taxon>
        <taxon>Chlorobiaceae</taxon>
        <taxon>Prosthecochloris</taxon>
    </lineage>
</organism>
<dbReference type="EMBL" id="CP001108">
    <property type="protein sequence ID" value="ACF47326.1"/>
    <property type="molecule type" value="Genomic_DNA"/>
</dbReference>
<dbReference type="RefSeq" id="WP_012506854.1">
    <property type="nucleotide sequence ID" value="NC_011059.1"/>
</dbReference>
<dbReference type="SMR" id="B4S6X1"/>
<dbReference type="STRING" id="290512.Paes_2335"/>
<dbReference type="KEGG" id="paa:Paes_2335"/>
<dbReference type="eggNOG" id="COG0706">
    <property type="taxonomic scope" value="Bacteria"/>
</dbReference>
<dbReference type="HOGENOM" id="CLU_016535_2_0_10"/>
<dbReference type="Proteomes" id="UP000002725">
    <property type="component" value="Chromosome"/>
</dbReference>
<dbReference type="GO" id="GO:0005886">
    <property type="term" value="C:plasma membrane"/>
    <property type="evidence" value="ECO:0007669"/>
    <property type="project" value="UniProtKB-SubCell"/>
</dbReference>
<dbReference type="GO" id="GO:0032977">
    <property type="term" value="F:membrane insertase activity"/>
    <property type="evidence" value="ECO:0007669"/>
    <property type="project" value="InterPro"/>
</dbReference>
<dbReference type="GO" id="GO:0051205">
    <property type="term" value="P:protein insertion into membrane"/>
    <property type="evidence" value="ECO:0007669"/>
    <property type="project" value="TreeGrafter"/>
</dbReference>
<dbReference type="GO" id="GO:0015031">
    <property type="term" value="P:protein transport"/>
    <property type="evidence" value="ECO:0007669"/>
    <property type="project" value="UniProtKB-KW"/>
</dbReference>
<dbReference type="CDD" id="cd20070">
    <property type="entry name" value="5TM_YidC_Alb3"/>
    <property type="match status" value="1"/>
</dbReference>
<dbReference type="CDD" id="cd19961">
    <property type="entry name" value="EcYidC-like_peri"/>
    <property type="match status" value="1"/>
</dbReference>
<dbReference type="Gene3D" id="2.70.98.90">
    <property type="match status" value="1"/>
</dbReference>
<dbReference type="HAMAP" id="MF_01810">
    <property type="entry name" value="YidC_type1"/>
    <property type="match status" value="1"/>
</dbReference>
<dbReference type="InterPro" id="IPR019998">
    <property type="entry name" value="Membr_insert_YidC"/>
</dbReference>
<dbReference type="InterPro" id="IPR028053">
    <property type="entry name" value="Membr_insert_YidC_N"/>
</dbReference>
<dbReference type="InterPro" id="IPR001708">
    <property type="entry name" value="YidC/ALB3/OXA1/COX18"/>
</dbReference>
<dbReference type="InterPro" id="IPR028055">
    <property type="entry name" value="YidC/Oxa/ALB_C"/>
</dbReference>
<dbReference type="InterPro" id="IPR047196">
    <property type="entry name" value="YidC_ALB_C"/>
</dbReference>
<dbReference type="InterPro" id="IPR038221">
    <property type="entry name" value="YidC_periplasmic_sf"/>
</dbReference>
<dbReference type="NCBIfam" id="TIGR03593">
    <property type="entry name" value="yidC_nterm"/>
    <property type="match status" value="1"/>
</dbReference>
<dbReference type="NCBIfam" id="TIGR03592">
    <property type="entry name" value="yidC_oxa1_cterm"/>
    <property type="match status" value="1"/>
</dbReference>
<dbReference type="PANTHER" id="PTHR12428:SF65">
    <property type="entry name" value="CYTOCHROME C OXIDASE ASSEMBLY PROTEIN COX18, MITOCHONDRIAL"/>
    <property type="match status" value="1"/>
</dbReference>
<dbReference type="PANTHER" id="PTHR12428">
    <property type="entry name" value="OXA1"/>
    <property type="match status" value="1"/>
</dbReference>
<dbReference type="Pfam" id="PF02096">
    <property type="entry name" value="60KD_IMP"/>
    <property type="match status" value="1"/>
</dbReference>
<dbReference type="Pfam" id="PF14849">
    <property type="entry name" value="YidC_periplas"/>
    <property type="match status" value="1"/>
</dbReference>
<dbReference type="PRINTS" id="PR00701">
    <property type="entry name" value="60KDINNERMP"/>
</dbReference>
<dbReference type="PRINTS" id="PR01900">
    <property type="entry name" value="YIDCPROTEIN"/>
</dbReference>
<gene>
    <name evidence="1" type="primary">yidC</name>
    <name type="ordered locus">Paes_2335</name>
</gene>
<comment type="function">
    <text evidence="1">Required for the insertion and/or proper folding and/or complex formation of integral membrane proteins into the membrane. Involved in integration of membrane proteins that insert both dependently and independently of the Sec translocase complex, as well as at least some lipoproteins. Aids folding of multispanning membrane proteins.</text>
</comment>
<comment type="subunit">
    <text evidence="1">Interacts with the Sec translocase complex via SecD. Specifically interacts with transmembrane segments of nascent integral membrane proteins during membrane integration.</text>
</comment>
<comment type="subcellular location">
    <subcellularLocation>
        <location evidence="1">Cell inner membrane</location>
        <topology evidence="1">Multi-pass membrane protein</topology>
    </subcellularLocation>
</comment>
<comment type="similarity">
    <text evidence="1">Belongs to the OXA1/ALB3/YidC family. Type 1 subfamily.</text>
</comment>
<feature type="chain" id="PRO_1000187689" description="Membrane protein insertase YidC">
    <location>
        <begin position="1"/>
        <end position="584"/>
    </location>
</feature>
<feature type="transmembrane region" description="Helical" evidence="1">
    <location>
        <begin position="5"/>
        <end position="25"/>
    </location>
</feature>
<feature type="transmembrane region" description="Helical" evidence="1">
    <location>
        <begin position="358"/>
        <end position="378"/>
    </location>
</feature>
<feature type="transmembrane region" description="Helical" evidence="1">
    <location>
        <begin position="428"/>
        <end position="448"/>
    </location>
</feature>
<feature type="transmembrane region" description="Helical" evidence="1">
    <location>
        <begin position="478"/>
        <end position="498"/>
    </location>
</feature>
<feature type="transmembrane region" description="Helical" evidence="1">
    <location>
        <begin position="516"/>
        <end position="536"/>
    </location>
</feature>
<feature type="region of interest" description="Disordered" evidence="2">
    <location>
        <begin position="563"/>
        <end position="584"/>
    </location>
</feature>
<feature type="compositionally biased region" description="Basic residues" evidence="2">
    <location>
        <begin position="574"/>
        <end position="584"/>
    </location>
</feature>
<accession>B4S6X1</accession>
<reference key="1">
    <citation type="submission" date="2008-06" db="EMBL/GenBank/DDBJ databases">
        <title>Complete sequence of chromosome of Prosthecochloris aestuarii DSM 271.</title>
        <authorList>
            <consortium name="US DOE Joint Genome Institute"/>
            <person name="Lucas S."/>
            <person name="Copeland A."/>
            <person name="Lapidus A."/>
            <person name="Glavina del Rio T."/>
            <person name="Dalin E."/>
            <person name="Tice H."/>
            <person name="Bruce D."/>
            <person name="Goodwin L."/>
            <person name="Pitluck S."/>
            <person name="Schmutz J."/>
            <person name="Larimer F."/>
            <person name="Land M."/>
            <person name="Hauser L."/>
            <person name="Kyrpides N."/>
            <person name="Anderson I."/>
            <person name="Liu Z."/>
            <person name="Li T."/>
            <person name="Zhao F."/>
            <person name="Overmann J."/>
            <person name="Bryant D.A."/>
            <person name="Richardson P."/>
        </authorList>
    </citation>
    <scope>NUCLEOTIDE SEQUENCE [LARGE SCALE GENOMIC DNA]</scope>
    <source>
        <strain>DSM 271 / SK 413</strain>
    </source>
</reference>